<dbReference type="EC" id="2.7.7.-" evidence="1"/>
<dbReference type="EC" id="2.7.7.108" evidence="1"/>
<dbReference type="EMBL" id="CP000362">
    <property type="protein sequence ID" value="ABG32644.1"/>
    <property type="molecule type" value="Genomic_DNA"/>
</dbReference>
<dbReference type="RefSeq" id="WP_011569260.1">
    <property type="nucleotide sequence ID" value="NC_008209.1"/>
</dbReference>
<dbReference type="SMR" id="Q164E9"/>
<dbReference type="STRING" id="375451.RD1_3136"/>
<dbReference type="KEGG" id="rde:RD1_3136"/>
<dbReference type="eggNOG" id="COG0397">
    <property type="taxonomic scope" value="Bacteria"/>
</dbReference>
<dbReference type="HOGENOM" id="CLU_010245_4_1_5"/>
<dbReference type="OrthoDB" id="9776281at2"/>
<dbReference type="Proteomes" id="UP000007029">
    <property type="component" value="Chromosome"/>
</dbReference>
<dbReference type="GO" id="GO:0070733">
    <property type="term" value="F:AMPylase activity"/>
    <property type="evidence" value="ECO:0007669"/>
    <property type="project" value="RHEA"/>
</dbReference>
<dbReference type="GO" id="GO:0005524">
    <property type="term" value="F:ATP binding"/>
    <property type="evidence" value="ECO:0007669"/>
    <property type="project" value="UniProtKB-UniRule"/>
</dbReference>
<dbReference type="GO" id="GO:0000287">
    <property type="term" value="F:magnesium ion binding"/>
    <property type="evidence" value="ECO:0007669"/>
    <property type="project" value="UniProtKB-UniRule"/>
</dbReference>
<dbReference type="HAMAP" id="MF_00692">
    <property type="entry name" value="YdiU_SelO"/>
    <property type="match status" value="1"/>
</dbReference>
<dbReference type="InterPro" id="IPR003846">
    <property type="entry name" value="SelO"/>
</dbReference>
<dbReference type="NCBIfam" id="NF000658">
    <property type="entry name" value="PRK00029.1"/>
    <property type="match status" value="1"/>
</dbReference>
<dbReference type="PANTHER" id="PTHR32057">
    <property type="entry name" value="PROTEIN ADENYLYLTRANSFERASE SELO, MITOCHONDRIAL"/>
    <property type="match status" value="1"/>
</dbReference>
<dbReference type="PANTHER" id="PTHR32057:SF14">
    <property type="entry name" value="PROTEIN ADENYLYLTRANSFERASE SELO, MITOCHONDRIAL"/>
    <property type="match status" value="1"/>
</dbReference>
<dbReference type="Pfam" id="PF02696">
    <property type="entry name" value="SelO"/>
    <property type="match status" value="1"/>
</dbReference>
<protein>
    <recommendedName>
        <fullName evidence="1">Protein nucleotidyltransferase YdiU</fullName>
        <ecNumber evidence="1">2.7.7.-</ecNumber>
    </recommendedName>
    <alternativeName>
        <fullName evidence="1">Protein adenylyltransferase YdiU</fullName>
        <ecNumber evidence="1">2.7.7.108</ecNumber>
    </alternativeName>
    <alternativeName>
        <fullName evidence="1">Protein uridylyltransferase YdiU</fullName>
        <ecNumber evidence="1">2.7.7.-</ecNumber>
    </alternativeName>
</protein>
<gene>
    <name evidence="1" type="primary">ydiU</name>
    <name evidence="1" type="synonym">selO</name>
    <name type="ordered locus">RD1_3136</name>
</gene>
<feature type="chain" id="PRO_0000271861" description="Protein nucleotidyltransferase YdiU">
    <location>
        <begin position="1"/>
        <end position="470"/>
    </location>
</feature>
<feature type="active site" description="Proton acceptor" evidence="1">
    <location>
        <position position="244"/>
    </location>
</feature>
<feature type="binding site" evidence="1">
    <location>
        <position position="86"/>
    </location>
    <ligand>
        <name>ATP</name>
        <dbReference type="ChEBI" id="CHEBI:30616"/>
    </ligand>
</feature>
<feature type="binding site" evidence="1">
    <location>
        <position position="88"/>
    </location>
    <ligand>
        <name>ATP</name>
        <dbReference type="ChEBI" id="CHEBI:30616"/>
    </ligand>
</feature>
<feature type="binding site" evidence="1">
    <location>
        <position position="89"/>
    </location>
    <ligand>
        <name>ATP</name>
        <dbReference type="ChEBI" id="CHEBI:30616"/>
    </ligand>
</feature>
<feature type="binding site" evidence="1">
    <location>
        <position position="109"/>
    </location>
    <ligand>
        <name>ATP</name>
        <dbReference type="ChEBI" id="CHEBI:30616"/>
    </ligand>
</feature>
<feature type="binding site" evidence="1">
    <location>
        <position position="121"/>
    </location>
    <ligand>
        <name>ATP</name>
        <dbReference type="ChEBI" id="CHEBI:30616"/>
    </ligand>
</feature>
<feature type="binding site" evidence="1">
    <location>
        <position position="122"/>
    </location>
    <ligand>
        <name>ATP</name>
        <dbReference type="ChEBI" id="CHEBI:30616"/>
    </ligand>
</feature>
<feature type="binding site" evidence="1">
    <location>
        <position position="172"/>
    </location>
    <ligand>
        <name>ATP</name>
        <dbReference type="ChEBI" id="CHEBI:30616"/>
    </ligand>
</feature>
<feature type="binding site" evidence="1">
    <location>
        <position position="179"/>
    </location>
    <ligand>
        <name>ATP</name>
        <dbReference type="ChEBI" id="CHEBI:30616"/>
    </ligand>
</feature>
<feature type="binding site" evidence="1">
    <location>
        <position position="245"/>
    </location>
    <ligand>
        <name>Mg(2+)</name>
        <dbReference type="ChEBI" id="CHEBI:18420"/>
    </ligand>
</feature>
<feature type="binding site" evidence="1">
    <location>
        <position position="254"/>
    </location>
    <ligand>
        <name>ATP</name>
        <dbReference type="ChEBI" id="CHEBI:30616"/>
    </ligand>
</feature>
<feature type="binding site" evidence="1">
    <location>
        <position position="254"/>
    </location>
    <ligand>
        <name>Mg(2+)</name>
        <dbReference type="ChEBI" id="CHEBI:18420"/>
    </ligand>
</feature>
<reference key="1">
    <citation type="journal article" date="2007" name="J. Bacteriol.">
        <title>The complete genome sequence of Roseobacter denitrificans reveals a mixotrophic rather than photosynthetic metabolism.</title>
        <authorList>
            <person name="Swingley W.D."/>
            <person name="Sadekar S."/>
            <person name="Mastrian S.D."/>
            <person name="Matthies H.J."/>
            <person name="Hao J."/>
            <person name="Ramos H."/>
            <person name="Acharya C.R."/>
            <person name="Conrad A.L."/>
            <person name="Taylor H.L."/>
            <person name="Dejesa L.C."/>
            <person name="Shah M.K."/>
            <person name="O'Huallachain M.E."/>
            <person name="Lince M.T."/>
            <person name="Blankenship R.E."/>
            <person name="Beatty J.T."/>
            <person name="Touchman J.W."/>
        </authorList>
    </citation>
    <scope>NUCLEOTIDE SEQUENCE [LARGE SCALE GENOMIC DNA]</scope>
    <source>
        <strain>ATCC 33942 / OCh 114</strain>
    </source>
</reference>
<evidence type="ECO:0000255" key="1">
    <source>
        <dbReference type="HAMAP-Rule" id="MF_00692"/>
    </source>
</evidence>
<proteinExistence type="inferred from homology"/>
<accession>Q164E9</accession>
<comment type="function">
    <text evidence="1">Nucleotidyltransferase involved in the post-translational modification of proteins. It can catalyze the addition of adenosine monophosphate (AMP) or uridine monophosphate (UMP) to a protein, resulting in modifications known as AMPylation and UMPylation.</text>
</comment>
<comment type="catalytic activity">
    <reaction evidence="1">
        <text>L-seryl-[protein] + ATP = 3-O-(5'-adenylyl)-L-seryl-[protein] + diphosphate</text>
        <dbReference type="Rhea" id="RHEA:58120"/>
        <dbReference type="Rhea" id="RHEA-COMP:9863"/>
        <dbReference type="Rhea" id="RHEA-COMP:15073"/>
        <dbReference type="ChEBI" id="CHEBI:29999"/>
        <dbReference type="ChEBI" id="CHEBI:30616"/>
        <dbReference type="ChEBI" id="CHEBI:33019"/>
        <dbReference type="ChEBI" id="CHEBI:142516"/>
        <dbReference type="EC" id="2.7.7.108"/>
    </reaction>
</comment>
<comment type="catalytic activity">
    <reaction evidence="1">
        <text>L-threonyl-[protein] + ATP = 3-O-(5'-adenylyl)-L-threonyl-[protein] + diphosphate</text>
        <dbReference type="Rhea" id="RHEA:54292"/>
        <dbReference type="Rhea" id="RHEA-COMP:11060"/>
        <dbReference type="Rhea" id="RHEA-COMP:13847"/>
        <dbReference type="ChEBI" id="CHEBI:30013"/>
        <dbReference type="ChEBI" id="CHEBI:30616"/>
        <dbReference type="ChEBI" id="CHEBI:33019"/>
        <dbReference type="ChEBI" id="CHEBI:138113"/>
        <dbReference type="EC" id="2.7.7.108"/>
    </reaction>
</comment>
<comment type="catalytic activity">
    <reaction evidence="1">
        <text>L-tyrosyl-[protein] + ATP = O-(5'-adenylyl)-L-tyrosyl-[protein] + diphosphate</text>
        <dbReference type="Rhea" id="RHEA:54288"/>
        <dbReference type="Rhea" id="RHEA-COMP:10136"/>
        <dbReference type="Rhea" id="RHEA-COMP:13846"/>
        <dbReference type="ChEBI" id="CHEBI:30616"/>
        <dbReference type="ChEBI" id="CHEBI:33019"/>
        <dbReference type="ChEBI" id="CHEBI:46858"/>
        <dbReference type="ChEBI" id="CHEBI:83624"/>
        <dbReference type="EC" id="2.7.7.108"/>
    </reaction>
</comment>
<comment type="catalytic activity">
    <reaction evidence="1">
        <text>L-histidyl-[protein] + UTP = N(tele)-(5'-uridylyl)-L-histidyl-[protein] + diphosphate</text>
        <dbReference type="Rhea" id="RHEA:83891"/>
        <dbReference type="Rhea" id="RHEA-COMP:9745"/>
        <dbReference type="Rhea" id="RHEA-COMP:20239"/>
        <dbReference type="ChEBI" id="CHEBI:29979"/>
        <dbReference type="ChEBI" id="CHEBI:33019"/>
        <dbReference type="ChEBI" id="CHEBI:46398"/>
        <dbReference type="ChEBI" id="CHEBI:233474"/>
    </reaction>
</comment>
<comment type="catalytic activity">
    <reaction evidence="1">
        <text>L-seryl-[protein] + UTP = O-(5'-uridylyl)-L-seryl-[protein] + diphosphate</text>
        <dbReference type="Rhea" id="RHEA:64604"/>
        <dbReference type="Rhea" id="RHEA-COMP:9863"/>
        <dbReference type="Rhea" id="RHEA-COMP:16635"/>
        <dbReference type="ChEBI" id="CHEBI:29999"/>
        <dbReference type="ChEBI" id="CHEBI:33019"/>
        <dbReference type="ChEBI" id="CHEBI:46398"/>
        <dbReference type="ChEBI" id="CHEBI:156051"/>
    </reaction>
</comment>
<comment type="catalytic activity">
    <reaction evidence="1">
        <text>L-tyrosyl-[protein] + UTP = O-(5'-uridylyl)-L-tyrosyl-[protein] + diphosphate</text>
        <dbReference type="Rhea" id="RHEA:83887"/>
        <dbReference type="Rhea" id="RHEA-COMP:10136"/>
        <dbReference type="Rhea" id="RHEA-COMP:20238"/>
        <dbReference type="ChEBI" id="CHEBI:33019"/>
        <dbReference type="ChEBI" id="CHEBI:46398"/>
        <dbReference type="ChEBI" id="CHEBI:46858"/>
        <dbReference type="ChEBI" id="CHEBI:90602"/>
    </reaction>
</comment>
<comment type="cofactor">
    <cofactor evidence="1">
        <name>Mg(2+)</name>
        <dbReference type="ChEBI" id="CHEBI:18420"/>
    </cofactor>
    <cofactor evidence="1">
        <name>Mn(2+)</name>
        <dbReference type="ChEBI" id="CHEBI:29035"/>
    </cofactor>
</comment>
<comment type="similarity">
    <text evidence="1">Belongs to the SELO family.</text>
</comment>
<keyword id="KW-0067">ATP-binding</keyword>
<keyword id="KW-0460">Magnesium</keyword>
<keyword id="KW-0464">Manganese</keyword>
<keyword id="KW-0479">Metal-binding</keyword>
<keyword id="KW-0547">Nucleotide-binding</keyword>
<keyword id="KW-0548">Nucleotidyltransferase</keyword>
<keyword id="KW-1185">Reference proteome</keyword>
<keyword id="KW-0808">Transferase</keyword>
<sequence length="470" mass="51091">MTITAPFDNSYARLPAVFYTRLKPTPVRDPSLIAYNEPLGDILGISAADAAERAAVFSGAKLPEGAAPLAQLYAGHQFGNFNPQLGDGRAILLGEVIGTDGKRYDVQLKGSGPTPYSRMGDGRAWLGPVLREYVVSEAMHALGVPTTRALAATLTGEDVLRETVLPGAVLTRVAASHLRVGTFQIFAHRRQIDALKELTDYAIARHAPDADGPLGLLRAVCAAQAELVAGWMSLGFIHGVMNTDNSAISGETIDYGPCAFMDVYHPDTVFSSIDQTGRYAYSNQPRIAVWNMAQLATALLQQMDDPEAAVEEATQIVHAMPTQIEAAWLDRMGKKIGIAKATPEDTPLIEGLLKLMQEQKADFTNTFDALARSDARDQFLDRDAFDEWCAQWRARLSTQSNPSAVMQAASPRVIPRNHRVEEMIAAAVQGDYAPFERLLKACTDPFNTDDTDLMRPPTKDEIVPATFCGT</sequence>
<name>SELO_ROSDO</name>
<organism>
    <name type="scientific">Roseobacter denitrificans (strain ATCC 33942 / OCh 114)</name>
    <name type="common">Erythrobacter sp. (strain OCh 114)</name>
    <name type="synonym">Roseobacter denitrificans</name>
    <dbReference type="NCBI Taxonomy" id="375451"/>
    <lineage>
        <taxon>Bacteria</taxon>
        <taxon>Pseudomonadati</taxon>
        <taxon>Pseudomonadota</taxon>
        <taxon>Alphaproteobacteria</taxon>
        <taxon>Rhodobacterales</taxon>
        <taxon>Roseobacteraceae</taxon>
        <taxon>Roseobacter</taxon>
    </lineage>
</organism>